<organism>
    <name type="scientific">Mus musculus</name>
    <name type="common">Mouse</name>
    <dbReference type="NCBI Taxonomy" id="10090"/>
    <lineage>
        <taxon>Eukaryota</taxon>
        <taxon>Metazoa</taxon>
        <taxon>Chordata</taxon>
        <taxon>Craniata</taxon>
        <taxon>Vertebrata</taxon>
        <taxon>Euteleostomi</taxon>
        <taxon>Mammalia</taxon>
        <taxon>Eutheria</taxon>
        <taxon>Euarchontoglires</taxon>
        <taxon>Glires</taxon>
        <taxon>Rodentia</taxon>
        <taxon>Myomorpha</taxon>
        <taxon>Muroidea</taxon>
        <taxon>Muridae</taxon>
        <taxon>Murinae</taxon>
        <taxon>Mus</taxon>
        <taxon>Mus</taxon>
    </lineage>
</organism>
<accession>Q80TM6</accession>
<accession>Q80YB1</accession>
<accession>Q8BLS5</accession>
<accession>Q9CW50</accession>
<gene>
    <name type="primary">R3hdm2</name>
    <name type="synonym">Kiaa1002</name>
</gene>
<dbReference type="EMBL" id="AK122416">
    <property type="protein sequence ID" value="BAC65698.1"/>
    <property type="status" value="ALT_INIT"/>
    <property type="molecule type" value="mRNA"/>
</dbReference>
<dbReference type="EMBL" id="AK004884">
    <property type="protein sequence ID" value="BAB23642.2"/>
    <property type="status" value="ALT_INIT"/>
    <property type="molecule type" value="mRNA"/>
</dbReference>
<dbReference type="EMBL" id="AK043545">
    <property type="status" value="NOT_ANNOTATED_CDS"/>
    <property type="molecule type" value="mRNA"/>
</dbReference>
<dbReference type="EMBL" id="BC043083">
    <property type="protein sequence ID" value="AAH43083.1"/>
    <property type="molecule type" value="mRNA"/>
</dbReference>
<dbReference type="EMBL" id="BC064442">
    <property type="protein sequence ID" value="AAH64442.1"/>
    <property type="molecule type" value="mRNA"/>
</dbReference>
<dbReference type="CCDS" id="CCDS24241.1">
    <molecule id="Q80TM6-4"/>
</dbReference>
<dbReference type="CCDS" id="CCDS48717.1">
    <molecule id="Q80TM6-1"/>
</dbReference>
<dbReference type="CCDS" id="CCDS88102.1">
    <molecule id="Q80TM6-3"/>
</dbReference>
<dbReference type="RefSeq" id="NP_001161764.1">
    <molecule id="Q80TM6-1"/>
    <property type="nucleotide sequence ID" value="NM_001168292.1"/>
</dbReference>
<dbReference type="RefSeq" id="NP_001346172.1">
    <molecule id="Q80TM6-1"/>
    <property type="nucleotide sequence ID" value="NM_001359243.1"/>
</dbReference>
<dbReference type="RefSeq" id="NP_001346175.1">
    <molecule id="Q80TM6-3"/>
    <property type="nucleotide sequence ID" value="NM_001359246.1"/>
</dbReference>
<dbReference type="RefSeq" id="NP_082176.4">
    <molecule id="Q80TM6-4"/>
    <property type="nucleotide sequence ID" value="NM_027900.4"/>
</dbReference>
<dbReference type="RefSeq" id="XP_006514215.1">
    <molecule id="Q80TM6-1"/>
    <property type="nucleotide sequence ID" value="XM_006514152.3"/>
</dbReference>
<dbReference type="RefSeq" id="XP_006514216.1">
    <molecule id="Q80TM6-1"/>
    <property type="nucleotide sequence ID" value="XM_006514153.2"/>
</dbReference>
<dbReference type="RefSeq" id="XP_006514217.1">
    <molecule id="Q80TM6-1"/>
    <property type="nucleotide sequence ID" value="XM_006514154.5"/>
</dbReference>
<dbReference type="RefSeq" id="XP_006514218.1">
    <property type="nucleotide sequence ID" value="XM_006514155.3"/>
</dbReference>
<dbReference type="RefSeq" id="XP_006514219.1">
    <molecule id="Q80TM6-1"/>
    <property type="nucleotide sequence ID" value="XM_006514156.4"/>
</dbReference>
<dbReference type="RefSeq" id="XP_006514220.1">
    <molecule id="Q80TM6-1"/>
    <property type="nucleotide sequence ID" value="XM_006514157.4"/>
</dbReference>
<dbReference type="RefSeq" id="XP_006514221.1">
    <molecule id="Q80TM6-3"/>
    <property type="nucleotide sequence ID" value="XM_006514158.3"/>
</dbReference>
<dbReference type="RefSeq" id="XP_006514225.1">
    <molecule id="Q80TM6-2"/>
    <property type="nucleotide sequence ID" value="XM_006514162.4"/>
</dbReference>
<dbReference type="RefSeq" id="XP_017169592.1">
    <property type="nucleotide sequence ID" value="XM_017314103.1"/>
</dbReference>
<dbReference type="RefSeq" id="XP_030101151.1">
    <molecule id="Q80TM6-2"/>
    <property type="nucleotide sequence ID" value="XM_030245291.2"/>
</dbReference>
<dbReference type="BMRB" id="Q80TM6"/>
<dbReference type="SMR" id="Q80TM6"/>
<dbReference type="BioGRID" id="214898">
    <property type="interactions" value="6"/>
</dbReference>
<dbReference type="FunCoup" id="Q80TM6">
    <property type="interactions" value="211"/>
</dbReference>
<dbReference type="STRING" id="10090.ENSMUSP00000126608"/>
<dbReference type="GlyGen" id="Q80TM6">
    <property type="glycosylation" value="5 sites, 2 N-linked glycans (2 sites), 1 O-linked glycan (2 sites)"/>
</dbReference>
<dbReference type="iPTMnet" id="Q80TM6"/>
<dbReference type="PhosphoSitePlus" id="Q80TM6"/>
<dbReference type="jPOST" id="Q80TM6"/>
<dbReference type="PaxDb" id="10090-ENSMUSP00000128659"/>
<dbReference type="PeptideAtlas" id="Q80TM6"/>
<dbReference type="ProteomicsDB" id="253136">
    <molecule id="Q80TM6-1"/>
</dbReference>
<dbReference type="ProteomicsDB" id="253137">
    <molecule id="Q80TM6-2"/>
</dbReference>
<dbReference type="ProteomicsDB" id="253138">
    <molecule id="Q80TM6-3"/>
</dbReference>
<dbReference type="ProteomicsDB" id="253139">
    <molecule id="Q80TM6-4"/>
</dbReference>
<dbReference type="Pumba" id="Q80TM6"/>
<dbReference type="DNASU" id="71750"/>
<dbReference type="Ensembl" id="ENSMUST00000064793.13">
    <molecule id="Q80TM6-4"/>
    <property type="protein sequence ID" value="ENSMUSP00000069724.7"/>
    <property type="gene ID" value="ENSMUSG00000025404.16"/>
</dbReference>
<dbReference type="Ensembl" id="ENSMUST00000077046.12">
    <molecule id="Q80TM6-1"/>
    <property type="protein sequence ID" value="ENSMUSP00000076303.6"/>
    <property type="gene ID" value="ENSMUSG00000025404.16"/>
</dbReference>
<dbReference type="Ensembl" id="ENSMUST00000105249.9">
    <molecule id="Q80TM6-2"/>
    <property type="protein sequence ID" value="ENSMUSP00000100884.3"/>
    <property type="gene ID" value="ENSMUSG00000025404.16"/>
</dbReference>
<dbReference type="Ensembl" id="ENSMUST00000105250.9">
    <molecule id="Q80TM6-3"/>
    <property type="protein sequence ID" value="ENSMUSP00000100885.3"/>
    <property type="gene ID" value="ENSMUSG00000025404.16"/>
</dbReference>
<dbReference type="Ensembl" id="ENSMUST00000105251.9">
    <molecule id="Q80TM6-3"/>
    <property type="protein sequence ID" value="ENSMUSP00000100886.3"/>
    <property type="gene ID" value="ENSMUSG00000025404.16"/>
</dbReference>
<dbReference type="Ensembl" id="ENSMUST00000166820.8">
    <molecule id="Q80TM6-1"/>
    <property type="protein sequence ID" value="ENSMUSP00000126608.2"/>
    <property type="gene ID" value="ENSMUSG00000025404.16"/>
</dbReference>
<dbReference type="GeneID" id="71750"/>
<dbReference type="KEGG" id="mmu:71750"/>
<dbReference type="UCSC" id="uc007hjl.2">
    <molecule id="Q80TM6-1"/>
    <property type="organism name" value="mouse"/>
</dbReference>
<dbReference type="UCSC" id="uc007hjm.2">
    <molecule id="Q80TM6-4"/>
    <property type="organism name" value="mouse"/>
</dbReference>
<dbReference type="UCSC" id="uc007hjo.2">
    <molecule id="Q80TM6-3"/>
    <property type="organism name" value="mouse"/>
</dbReference>
<dbReference type="UCSC" id="uc007hjp.2">
    <molecule id="Q80TM6-2"/>
    <property type="organism name" value="mouse"/>
</dbReference>
<dbReference type="AGR" id="MGI:1919000"/>
<dbReference type="CTD" id="22864"/>
<dbReference type="MGI" id="MGI:1919000">
    <property type="gene designation" value="R3hdm2"/>
</dbReference>
<dbReference type="VEuPathDB" id="HostDB:ENSMUSG00000025404"/>
<dbReference type="eggNOG" id="KOG2953">
    <property type="taxonomic scope" value="Eukaryota"/>
</dbReference>
<dbReference type="GeneTree" id="ENSGT00940000155609"/>
<dbReference type="HOGENOM" id="CLU_007817_0_0_1"/>
<dbReference type="InParanoid" id="Q80TM6"/>
<dbReference type="OMA" id="XMALGAP"/>
<dbReference type="OrthoDB" id="278430at2759"/>
<dbReference type="PhylomeDB" id="Q80TM6"/>
<dbReference type="BioGRID-ORCS" id="71750">
    <property type="hits" value="0 hits in 31 CRISPR screens"/>
</dbReference>
<dbReference type="ChiTaRS" id="R3hdm2">
    <property type="organism name" value="mouse"/>
</dbReference>
<dbReference type="PRO" id="PR:Q80TM6"/>
<dbReference type="Proteomes" id="UP000000589">
    <property type="component" value="Chromosome 10"/>
</dbReference>
<dbReference type="RNAct" id="Q80TM6">
    <property type="molecule type" value="protein"/>
</dbReference>
<dbReference type="Bgee" id="ENSMUSG00000025404">
    <property type="expression patterns" value="Expressed in animal zygote and 226 other cell types or tissues"/>
</dbReference>
<dbReference type="ExpressionAtlas" id="Q80TM6">
    <property type="expression patterns" value="baseline and differential"/>
</dbReference>
<dbReference type="GO" id="GO:0005634">
    <property type="term" value="C:nucleus"/>
    <property type="evidence" value="ECO:0007669"/>
    <property type="project" value="UniProtKB-SubCell"/>
</dbReference>
<dbReference type="GO" id="GO:0003676">
    <property type="term" value="F:nucleic acid binding"/>
    <property type="evidence" value="ECO:0007669"/>
    <property type="project" value="InterPro"/>
</dbReference>
<dbReference type="CDD" id="cd02642">
    <property type="entry name" value="R3H_encore_like"/>
    <property type="match status" value="1"/>
</dbReference>
<dbReference type="FunFam" id="3.30.1370.50:FF:000001">
    <property type="entry name" value="R3H domain-containing protein 2 isoform 1"/>
    <property type="match status" value="1"/>
</dbReference>
<dbReference type="Gene3D" id="3.30.1370.50">
    <property type="entry name" value="R3H-like domain"/>
    <property type="match status" value="1"/>
</dbReference>
<dbReference type="InterPro" id="IPR001374">
    <property type="entry name" value="R3H_dom"/>
</dbReference>
<dbReference type="InterPro" id="IPR036867">
    <property type="entry name" value="R3H_dom_sf"/>
</dbReference>
<dbReference type="InterPro" id="IPR051937">
    <property type="entry name" value="R3H_domain_containing"/>
</dbReference>
<dbReference type="InterPro" id="IPR024771">
    <property type="entry name" value="SUZ"/>
</dbReference>
<dbReference type="PANTHER" id="PTHR15672">
    <property type="entry name" value="CAMP-REGULATED PHOSPHOPROTEIN 21 RELATED R3H DOMAIN CONTAINING PROTEIN"/>
    <property type="match status" value="1"/>
</dbReference>
<dbReference type="PANTHER" id="PTHR15672:SF13">
    <property type="entry name" value="R3H DOMAIN-CONTAINING PROTEIN 2"/>
    <property type="match status" value="1"/>
</dbReference>
<dbReference type="Pfam" id="PF01424">
    <property type="entry name" value="R3H"/>
    <property type="match status" value="1"/>
</dbReference>
<dbReference type="Pfam" id="PF12752">
    <property type="entry name" value="SUZ"/>
    <property type="match status" value="1"/>
</dbReference>
<dbReference type="SMART" id="SM00393">
    <property type="entry name" value="R3H"/>
    <property type="match status" value="1"/>
</dbReference>
<dbReference type="SUPFAM" id="SSF82708">
    <property type="entry name" value="R3H domain"/>
    <property type="match status" value="1"/>
</dbReference>
<dbReference type="PROSITE" id="PS51061">
    <property type="entry name" value="R3H"/>
    <property type="match status" value="1"/>
</dbReference>
<dbReference type="PROSITE" id="PS51673">
    <property type="entry name" value="SUZ"/>
    <property type="match status" value="1"/>
</dbReference>
<comment type="subcellular location">
    <subcellularLocation>
        <location evidence="7">Nucleus</location>
    </subcellularLocation>
</comment>
<comment type="alternative products">
    <event type="alternative splicing"/>
    <isoform>
        <id>Q80TM6-1</id>
        <name>1</name>
        <sequence type="displayed"/>
    </isoform>
    <isoform>
        <id>Q80TM6-2</id>
        <name>2</name>
        <sequence type="described" ref="VSP_010553 VSP_010554"/>
    </isoform>
    <isoform>
        <id>Q80TM6-3</id>
        <name>3</name>
        <sequence type="described" ref="VSP_010553"/>
    </isoform>
    <isoform>
        <id>Q80TM6-4</id>
        <name>4</name>
        <sequence type="described" ref="VSP_010555 VSP_010556"/>
    </isoform>
</comment>
<comment type="sequence caution" evidence="7">
    <conflict type="frameshift">
        <sequence resource="EMBL" id="AK043545"/>
    </conflict>
</comment>
<comment type="sequence caution" evidence="7">
    <conflict type="erroneous initiation">
        <sequence resource="EMBL-CDS" id="BAB23642"/>
    </conflict>
</comment>
<comment type="sequence caution" evidence="7">
    <conflict type="erroneous initiation">
        <sequence resource="EMBL-CDS" id="BAC65698"/>
    </conflict>
</comment>
<reference key="1">
    <citation type="journal article" date="2003" name="DNA Res.">
        <title>Prediction of the coding sequences of mouse homologues of KIAA gene: II. The complete nucleotide sequences of 400 mouse KIAA-homologous cDNAs identified by screening of terminal sequences of cDNA clones randomly sampled from size-fractionated libraries.</title>
        <authorList>
            <person name="Okazaki N."/>
            <person name="Kikuno R."/>
            <person name="Ohara R."/>
            <person name="Inamoto S."/>
            <person name="Aizawa H."/>
            <person name="Yuasa S."/>
            <person name="Nakajima D."/>
            <person name="Nagase T."/>
            <person name="Ohara O."/>
            <person name="Koga H."/>
        </authorList>
    </citation>
    <scope>NUCLEOTIDE SEQUENCE [LARGE SCALE MRNA] (ISOFORM 1)</scope>
    <source>
        <tissue>Brain</tissue>
    </source>
</reference>
<reference key="2">
    <citation type="journal article" date="2005" name="Science">
        <title>The transcriptional landscape of the mammalian genome.</title>
        <authorList>
            <person name="Carninci P."/>
            <person name="Kasukawa T."/>
            <person name="Katayama S."/>
            <person name="Gough J."/>
            <person name="Frith M.C."/>
            <person name="Maeda N."/>
            <person name="Oyama R."/>
            <person name="Ravasi T."/>
            <person name="Lenhard B."/>
            <person name="Wells C."/>
            <person name="Kodzius R."/>
            <person name="Shimokawa K."/>
            <person name="Bajic V.B."/>
            <person name="Brenner S.E."/>
            <person name="Batalov S."/>
            <person name="Forrest A.R."/>
            <person name="Zavolan M."/>
            <person name="Davis M.J."/>
            <person name="Wilming L.G."/>
            <person name="Aidinis V."/>
            <person name="Allen J.E."/>
            <person name="Ambesi-Impiombato A."/>
            <person name="Apweiler R."/>
            <person name="Aturaliya R.N."/>
            <person name="Bailey T.L."/>
            <person name="Bansal M."/>
            <person name="Baxter L."/>
            <person name="Beisel K.W."/>
            <person name="Bersano T."/>
            <person name="Bono H."/>
            <person name="Chalk A.M."/>
            <person name="Chiu K.P."/>
            <person name="Choudhary V."/>
            <person name="Christoffels A."/>
            <person name="Clutterbuck D.R."/>
            <person name="Crowe M.L."/>
            <person name="Dalla E."/>
            <person name="Dalrymple B.P."/>
            <person name="de Bono B."/>
            <person name="Della Gatta G."/>
            <person name="di Bernardo D."/>
            <person name="Down T."/>
            <person name="Engstrom P."/>
            <person name="Fagiolini M."/>
            <person name="Faulkner G."/>
            <person name="Fletcher C.F."/>
            <person name="Fukushima T."/>
            <person name="Furuno M."/>
            <person name="Futaki S."/>
            <person name="Gariboldi M."/>
            <person name="Georgii-Hemming P."/>
            <person name="Gingeras T.R."/>
            <person name="Gojobori T."/>
            <person name="Green R.E."/>
            <person name="Gustincich S."/>
            <person name="Harbers M."/>
            <person name="Hayashi Y."/>
            <person name="Hensch T.K."/>
            <person name="Hirokawa N."/>
            <person name="Hill D."/>
            <person name="Huminiecki L."/>
            <person name="Iacono M."/>
            <person name="Ikeo K."/>
            <person name="Iwama A."/>
            <person name="Ishikawa T."/>
            <person name="Jakt M."/>
            <person name="Kanapin A."/>
            <person name="Katoh M."/>
            <person name="Kawasawa Y."/>
            <person name="Kelso J."/>
            <person name="Kitamura H."/>
            <person name="Kitano H."/>
            <person name="Kollias G."/>
            <person name="Krishnan S.P."/>
            <person name="Kruger A."/>
            <person name="Kummerfeld S.K."/>
            <person name="Kurochkin I.V."/>
            <person name="Lareau L.F."/>
            <person name="Lazarevic D."/>
            <person name="Lipovich L."/>
            <person name="Liu J."/>
            <person name="Liuni S."/>
            <person name="McWilliam S."/>
            <person name="Madan Babu M."/>
            <person name="Madera M."/>
            <person name="Marchionni L."/>
            <person name="Matsuda H."/>
            <person name="Matsuzawa S."/>
            <person name="Miki H."/>
            <person name="Mignone F."/>
            <person name="Miyake S."/>
            <person name="Morris K."/>
            <person name="Mottagui-Tabar S."/>
            <person name="Mulder N."/>
            <person name="Nakano N."/>
            <person name="Nakauchi H."/>
            <person name="Ng P."/>
            <person name="Nilsson R."/>
            <person name="Nishiguchi S."/>
            <person name="Nishikawa S."/>
            <person name="Nori F."/>
            <person name="Ohara O."/>
            <person name="Okazaki Y."/>
            <person name="Orlando V."/>
            <person name="Pang K.C."/>
            <person name="Pavan W.J."/>
            <person name="Pavesi G."/>
            <person name="Pesole G."/>
            <person name="Petrovsky N."/>
            <person name="Piazza S."/>
            <person name="Reed J."/>
            <person name="Reid J.F."/>
            <person name="Ring B.Z."/>
            <person name="Ringwald M."/>
            <person name="Rost B."/>
            <person name="Ruan Y."/>
            <person name="Salzberg S.L."/>
            <person name="Sandelin A."/>
            <person name="Schneider C."/>
            <person name="Schoenbach C."/>
            <person name="Sekiguchi K."/>
            <person name="Semple C.A."/>
            <person name="Seno S."/>
            <person name="Sessa L."/>
            <person name="Sheng Y."/>
            <person name="Shibata Y."/>
            <person name="Shimada H."/>
            <person name="Shimada K."/>
            <person name="Silva D."/>
            <person name="Sinclair B."/>
            <person name="Sperling S."/>
            <person name="Stupka E."/>
            <person name="Sugiura K."/>
            <person name="Sultana R."/>
            <person name="Takenaka Y."/>
            <person name="Taki K."/>
            <person name="Tammoja K."/>
            <person name="Tan S.L."/>
            <person name="Tang S."/>
            <person name="Taylor M.S."/>
            <person name="Tegner J."/>
            <person name="Teichmann S.A."/>
            <person name="Ueda H.R."/>
            <person name="van Nimwegen E."/>
            <person name="Verardo R."/>
            <person name="Wei C.L."/>
            <person name="Yagi K."/>
            <person name="Yamanishi H."/>
            <person name="Zabarovsky E."/>
            <person name="Zhu S."/>
            <person name="Zimmer A."/>
            <person name="Hide W."/>
            <person name="Bult C."/>
            <person name="Grimmond S.M."/>
            <person name="Teasdale R.D."/>
            <person name="Liu E.T."/>
            <person name="Brusic V."/>
            <person name="Quackenbush J."/>
            <person name="Wahlestedt C."/>
            <person name="Mattick J.S."/>
            <person name="Hume D.A."/>
            <person name="Kai C."/>
            <person name="Sasaki D."/>
            <person name="Tomaru Y."/>
            <person name="Fukuda S."/>
            <person name="Kanamori-Katayama M."/>
            <person name="Suzuki M."/>
            <person name="Aoki J."/>
            <person name="Arakawa T."/>
            <person name="Iida J."/>
            <person name="Imamura K."/>
            <person name="Itoh M."/>
            <person name="Kato T."/>
            <person name="Kawaji H."/>
            <person name="Kawagashira N."/>
            <person name="Kawashima T."/>
            <person name="Kojima M."/>
            <person name="Kondo S."/>
            <person name="Konno H."/>
            <person name="Nakano K."/>
            <person name="Ninomiya N."/>
            <person name="Nishio T."/>
            <person name="Okada M."/>
            <person name="Plessy C."/>
            <person name="Shibata K."/>
            <person name="Shiraki T."/>
            <person name="Suzuki S."/>
            <person name="Tagami M."/>
            <person name="Waki K."/>
            <person name="Watahiki A."/>
            <person name="Okamura-Oho Y."/>
            <person name="Suzuki H."/>
            <person name="Kawai J."/>
            <person name="Hayashizaki Y."/>
        </authorList>
    </citation>
    <scope>NUCLEOTIDE SEQUENCE [LARGE SCALE MRNA] (ISOFORM 4)</scope>
    <scope>NUCLEOTIDE SEQUENCE [LARGE SCALE MRNA] OF 289-1044 (ISOFORM 2)</scope>
    <source>
        <strain>C57BL/6J</strain>
        <tissue>Brain cortex</tissue>
        <tissue>Liver</tissue>
    </source>
</reference>
<reference key="3">
    <citation type="journal article" date="2004" name="Genome Res.">
        <title>The status, quality, and expansion of the NIH full-length cDNA project: the Mammalian Gene Collection (MGC).</title>
        <authorList>
            <consortium name="The MGC Project Team"/>
        </authorList>
    </citation>
    <scope>NUCLEOTIDE SEQUENCE [LARGE SCALE MRNA] OF 132-1044 (ISOFORM 2)</scope>
    <scope>NUCLEOTIDE SEQUENCE [LARGE SCALE MRNA] OF 57-1044 (ISOFORM 3)</scope>
    <source>
        <strain>C57BL/6J</strain>
        <tissue>Brain</tissue>
    </source>
</reference>
<reference key="4">
    <citation type="journal article" date="2004" name="Mol. Cell. Proteomics">
        <title>Phosphoproteomic analysis of the developing mouse brain.</title>
        <authorList>
            <person name="Ballif B.A."/>
            <person name="Villen J."/>
            <person name="Beausoleil S.A."/>
            <person name="Schwartz D."/>
            <person name="Gygi S.P."/>
        </authorList>
    </citation>
    <scope>IDENTIFICATION BY MASS SPECTROMETRY [LARGE SCALE ANALYSIS]</scope>
    <source>
        <tissue>Embryonic brain</tissue>
    </source>
</reference>
<reference key="5">
    <citation type="journal article" date="2006" name="Mol. Cell. Proteomics">
        <title>Comprehensive identification of phosphorylation sites in postsynaptic density preparations.</title>
        <authorList>
            <person name="Trinidad J.C."/>
            <person name="Specht C.G."/>
            <person name="Thalhammer A."/>
            <person name="Schoepfer R."/>
            <person name="Burlingame A.L."/>
        </authorList>
    </citation>
    <scope>IDENTIFICATION BY MASS SPECTROMETRY [LARGE SCALE ANALYSIS]</scope>
    <source>
        <tissue>Brain</tissue>
    </source>
</reference>
<reference key="6">
    <citation type="journal article" date="2010" name="Cell">
        <title>A tissue-specific atlas of mouse protein phosphorylation and expression.</title>
        <authorList>
            <person name="Huttlin E.L."/>
            <person name="Jedrychowski M.P."/>
            <person name="Elias J.E."/>
            <person name="Goswami T."/>
            <person name="Rad R."/>
            <person name="Beausoleil S.A."/>
            <person name="Villen J."/>
            <person name="Haas W."/>
            <person name="Sowa M.E."/>
            <person name="Gygi S.P."/>
        </authorList>
    </citation>
    <scope>PHOSPHORYLATION [LARGE SCALE ANALYSIS] AT SER-143; SER-365; THR-924 AND THR-928</scope>
    <scope>IDENTIFICATION BY MASS SPECTROMETRY [LARGE SCALE ANALYSIS]</scope>
    <source>
        <tissue>Brain</tissue>
        <tissue>Brown adipose tissue</tissue>
        <tissue>Heart</tissue>
        <tissue>Kidney</tissue>
        <tissue>Liver</tissue>
        <tissue>Lung</tissue>
        <tissue>Pancreas</tissue>
        <tissue>Spleen</tissue>
        <tissue>Testis</tissue>
    </source>
</reference>
<name>R3HD2_MOUSE</name>
<evidence type="ECO:0000250" key="1">
    <source>
        <dbReference type="UniProtKB" id="Q9Y2K5"/>
    </source>
</evidence>
<evidence type="ECO:0000255" key="2">
    <source>
        <dbReference type="PROSITE-ProRule" id="PRU00382"/>
    </source>
</evidence>
<evidence type="ECO:0000255" key="3">
    <source>
        <dbReference type="PROSITE-ProRule" id="PRU01009"/>
    </source>
</evidence>
<evidence type="ECO:0000256" key="4">
    <source>
        <dbReference type="SAM" id="MobiDB-lite"/>
    </source>
</evidence>
<evidence type="ECO:0000303" key="5">
    <source>
    </source>
</evidence>
<evidence type="ECO:0000303" key="6">
    <source>
    </source>
</evidence>
<evidence type="ECO:0000305" key="7"/>
<evidence type="ECO:0007744" key="8">
    <source>
    </source>
</evidence>
<sequence>MSNSNTTQETLEIMKESEKKLVEESVNKNKFISKTPSKEDVEKEGEENGLRQETQRRTSSHGHARKRAKSNSKLKLVRSLAVCEESSTPFVDGPLDTQDIIQLHISCPSDKEEEKSTKDVSEKEDKDKSKEKVPRKMLSRDSSQEYTDSTGIDLHEFLVNTLKKNPRDRMMLLKLEQEILDFINDNNNQFKKFPQMTSYHRMLLHRVAAYFGMDHNVDQTGKAVIINKTSSTRIPEQRFSEHIKDEKNTEFQQRFILKRDDASMDRDDNQMRVPLQDGRRSKSIEEREEEYQRVRERIFARETGQNGYLNDIRLSKEAFSSSSHKRRQIFRGNREGLSRTSSSRQSSTDSELKSLEPRPWSSTDSDGSVRSMRPPVTKASSFSGISILTRGDSIGSSKGGSAGRLSRPGMALGAPEVCNQVTSPQSVRGLLPCTAQQQQQQQQQQQQLPALPPTPQHQPPLNNHMISQPVPALQPSPQPVQFSPSSCPQVLLPVSPPQQYNMAEDLSNPFGQMSLSRQGSTEAADPSSALFQPPLISQHPQQASFIMASAGQPLPTSNYSTSSHAPPTQQVLPPQGYMQPPQQIQVSYYPPGQYPNSNQQYRPLSHPVAYSPQRGQQLPQASQQPGLQPMMSNQQQTAYQGMLGVQQPQNQGLLSNQRSSMGGQMQGLVVQYTPLPSYQVPVGSDSQNVVQPSFQQPMLVPASQSVQGGLPTGGVPVYYSMIPPAQQNGTSPSVGFLQPPGSEQYQMPQSPSPCSPPQMSQQYSGVSPSGPGVVVMQLNVPNGPQAPQNPSMVQWSHCKYYSVEQRGQKPGDLYSPDGSPQANAQMGSSPVTSPTQSPAPSPVTSLSNVCTGLSPLPVLTPFPRPGGPAQGDGRYSLLGQPLQYNLSICPPLLHGQSTYTVHQGQSGLKHGNRGKRQALKSASTDLGTADVVLGRVLEVTDLPEGITRTEADKLFTQLAMSGAKIQWLKDAQGLPGAGGGDNSGTAENGRHPDLAALYTIVAVFPSPLAAQNASLRLNNSVSRFKLRVAKKNYDLRILERASSQ</sequence>
<feature type="chain" id="PRO_0000050788" description="R3H domain-containing protein 2">
    <location>
        <begin position="1"/>
        <end position="1044"/>
    </location>
</feature>
<feature type="domain" description="R3H" evidence="2">
    <location>
        <begin position="169"/>
        <end position="232"/>
    </location>
</feature>
<feature type="domain" description="SUZ" evidence="3">
    <location>
        <begin position="233"/>
        <end position="303"/>
    </location>
</feature>
<feature type="region of interest" description="Disordered" evidence="4">
    <location>
        <begin position="23"/>
        <end position="71"/>
    </location>
</feature>
<feature type="region of interest" description="Disordered" evidence="4">
    <location>
        <begin position="106"/>
        <end position="147"/>
    </location>
</feature>
<feature type="region of interest" description="Disordered" evidence="4">
    <location>
        <begin position="261"/>
        <end position="288"/>
    </location>
</feature>
<feature type="region of interest" description="Disordered" evidence="4">
    <location>
        <begin position="320"/>
        <end position="408"/>
    </location>
</feature>
<feature type="region of interest" description="Disordered" evidence="4">
    <location>
        <begin position="433"/>
        <end position="485"/>
    </location>
</feature>
<feature type="region of interest" description="Disordered" evidence="4">
    <location>
        <begin position="502"/>
        <end position="533"/>
    </location>
</feature>
<feature type="region of interest" description="Disordered" evidence="4">
    <location>
        <begin position="551"/>
        <end position="600"/>
    </location>
</feature>
<feature type="region of interest" description="Disordered" evidence="4">
    <location>
        <begin position="729"/>
        <end position="770"/>
    </location>
</feature>
<feature type="region of interest" description="Disordered" evidence="4">
    <location>
        <begin position="807"/>
        <end position="848"/>
    </location>
</feature>
<feature type="compositionally biased region" description="Basic and acidic residues" evidence="4">
    <location>
        <begin position="36"/>
        <end position="56"/>
    </location>
</feature>
<feature type="compositionally biased region" description="Basic residues" evidence="4">
    <location>
        <begin position="58"/>
        <end position="71"/>
    </location>
</feature>
<feature type="compositionally biased region" description="Basic and acidic residues" evidence="4">
    <location>
        <begin position="109"/>
        <end position="143"/>
    </location>
</feature>
<feature type="compositionally biased region" description="Basic and acidic residues" evidence="4">
    <location>
        <begin position="261"/>
        <end position="270"/>
    </location>
</feature>
<feature type="compositionally biased region" description="Basic and acidic residues" evidence="4">
    <location>
        <begin position="277"/>
        <end position="288"/>
    </location>
</feature>
<feature type="compositionally biased region" description="Low complexity" evidence="4">
    <location>
        <begin position="338"/>
        <end position="349"/>
    </location>
</feature>
<feature type="compositionally biased region" description="Low complexity" evidence="4">
    <location>
        <begin position="433"/>
        <end position="449"/>
    </location>
</feature>
<feature type="compositionally biased region" description="Polar residues" evidence="4">
    <location>
        <begin position="509"/>
        <end position="521"/>
    </location>
</feature>
<feature type="compositionally biased region" description="Polar residues" evidence="4">
    <location>
        <begin position="554"/>
        <end position="572"/>
    </location>
</feature>
<feature type="compositionally biased region" description="Low complexity" evidence="4">
    <location>
        <begin position="757"/>
        <end position="770"/>
    </location>
</feature>
<feature type="compositionally biased region" description="Polar residues" evidence="4">
    <location>
        <begin position="818"/>
        <end position="848"/>
    </location>
</feature>
<feature type="modified residue" description="Phosphoserine" evidence="1">
    <location>
        <position position="37"/>
    </location>
</feature>
<feature type="modified residue" description="Phosphoserine" evidence="8">
    <location>
        <position position="143"/>
    </location>
</feature>
<feature type="modified residue" description="Phosphoserine" evidence="1">
    <location>
        <position position="362"/>
    </location>
</feature>
<feature type="modified residue" description="Phosphoserine" evidence="8">
    <location>
        <position position="365"/>
    </location>
</feature>
<feature type="modified residue" description="Phosphoserine" evidence="1">
    <location>
        <position position="381"/>
    </location>
</feature>
<feature type="modified residue" description="Phosphoserine" evidence="1">
    <location>
        <position position="921"/>
    </location>
</feature>
<feature type="modified residue" description="Phosphoserine" evidence="1">
    <location>
        <position position="923"/>
    </location>
</feature>
<feature type="modified residue" description="Phosphothreonine" evidence="8">
    <location>
        <position position="924"/>
    </location>
</feature>
<feature type="modified residue" description="Phosphothreonine" evidence="8">
    <location>
        <position position="928"/>
    </location>
</feature>
<feature type="splice variant" id="VSP_010555" description="In isoform 4." evidence="6">
    <location>
        <begin position="271"/>
        <end position="302"/>
    </location>
</feature>
<feature type="splice variant" id="VSP_010553" description="In isoform 2 and isoform 3." evidence="5 6">
    <location>
        <begin position="313"/>
        <end position="330"/>
    </location>
</feature>
<feature type="splice variant" id="VSP_010554" description="In isoform 2." evidence="5 6">
    <location>
        <begin position="469"/>
        <end position="502"/>
    </location>
</feature>
<feature type="splice variant" id="VSP_010556" description="In isoform 4." evidence="6">
    <location>
        <begin position="490"/>
        <end position="502"/>
    </location>
</feature>
<feature type="sequence conflict" description="In Ref. 2; AK043545." evidence="7" ref="2">
    <original>K</original>
    <variation>R</variation>
    <location>
        <position position="28"/>
    </location>
</feature>
<feature type="sequence conflict" description="In Ref. 2; AK043545." evidence="7" ref="2">
    <original>K</original>
    <variation>T</variation>
    <location>
        <position position="964"/>
    </location>
</feature>
<feature type="sequence conflict" description="In Ref. 2; AK043545." evidence="7" ref="2">
    <original>L</original>
    <variation>I</variation>
    <location>
        <position position="1015"/>
    </location>
</feature>
<feature type="sequence conflict" description="In Ref. 2; AK043545." evidence="7" ref="2">
    <original>A</original>
    <variation>D</variation>
    <location>
        <position position="1029"/>
    </location>
</feature>
<keyword id="KW-0025">Alternative splicing</keyword>
<keyword id="KW-0539">Nucleus</keyword>
<keyword id="KW-0597">Phosphoprotein</keyword>
<keyword id="KW-1185">Reference proteome</keyword>
<proteinExistence type="evidence at protein level"/>
<protein>
    <recommendedName>
        <fullName>R3H domain-containing protein 2</fullName>
    </recommendedName>
</protein>